<comment type="function">
    <text evidence="1">NDH-1 shuttles electrons from NADH, via FMN and iron-sulfur (Fe-S) centers, to quinones in the respiratory chain. The immediate electron acceptor for the enzyme in this species is believed to be ubiquinone. Couples the redox reaction to proton translocation (for every two electrons transferred, four hydrogen ions are translocated across the cytoplasmic membrane), and thus conserves the redox energy in a proton gradient. This subunit may bind ubiquinone.</text>
</comment>
<comment type="catalytic activity">
    <reaction evidence="1">
        <text>a quinone + NADH + 5 H(+)(in) = a quinol + NAD(+) + 4 H(+)(out)</text>
        <dbReference type="Rhea" id="RHEA:57888"/>
        <dbReference type="ChEBI" id="CHEBI:15378"/>
        <dbReference type="ChEBI" id="CHEBI:24646"/>
        <dbReference type="ChEBI" id="CHEBI:57540"/>
        <dbReference type="ChEBI" id="CHEBI:57945"/>
        <dbReference type="ChEBI" id="CHEBI:132124"/>
    </reaction>
</comment>
<comment type="subunit">
    <text evidence="1">NDH-1 is composed of 13 different subunits. Subunits NuoA, H, J, K, L, M, N constitute the membrane sector of the complex.</text>
</comment>
<comment type="subcellular location">
    <subcellularLocation>
        <location evidence="1">Cell inner membrane</location>
        <topology evidence="1">Multi-pass membrane protein</topology>
    </subcellularLocation>
</comment>
<comment type="similarity">
    <text evidence="1">Belongs to the complex I subunit 1 family.</text>
</comment>
<sequence length="335" mass="37443">MTWFTPDVIDAIIAVVKAIVVLLAVVVCGALLSFVERRLLGWWQDRYGPNRVGPFGMFQIAADMLKMFFKEDWTPPFADKVIFTLAPVVAMSALLIAFAVIPITPTWGVADLNIGLLFFFAMAGLSVYAVLFAGWSSNNKFALLGSLRASAQTVSYEVFMGLALMGIVVQVGSFNMRDIVEYQAQNLWFIIPQFFGFCTFFIAGVAVTHRHPFDQPEAEQELADGYHIEYAGMKWGMFFVGEYIGIILISALLVTLFFGGWHGPFDILPSLAFFWFALKTAFFIMLFILLRASIPRPRYDQVMDFSWKFCLPLTLINLLVTAAIVLLNTPAGSVQ</sequence>
<proteinExistence type="inferred from homology"/>
<feature type="chain" id="PRO_0000240103" description="NADH-quinone oxidoreductase subunit H">
    <location>
        <begin position="1"/>
        <end position="335"/>
    </location>
</feature>
<feature type="transmembrane region" description="Helical" evidence="1">
    <location>
        <begin position="12"/>
        <end position="32"/>
    </location>
</feature>
<feature type="transmembrane region" description="Helical" evidence="1">
    <location>
        <begin position="81"/>
        <end position="101"/>
    </location>
</feature>
<feature type="transmembrane region" description="Helical" evidence="1">
    <location>
        <begin position="114"/>
        <end position="134"/>
    </location>
</feature>
<feature type="transmembrane region" description="Helical" evidence="1">
    <location>
        <begin position="154"/>
        <end position="174"/>
    </location>
</feature>
<feature type="transmembrane region" description="Helical" evidence="1">
    <location>
        <begin position="187"/>
        <end position="207"/>
    </location>
</feature>
<feature type="transmembrane region" description="Helical" evidence="1">
    <location>
        <begin position="238"/>
        <end position="258"/>
    </location>
</feature>
<feature type="transmembrane region" description="Helical" evidence="1">
    <location>
        <begin position="270"/>
        <end position="290"/>
    </location>
</feature>
<feature type="transmembrane region" description="Helical" evidence="1">
    <location>
        <begin position="307"/>
        <end position="327"/>
    </location>
</feature>
<organism>
    <name type="scientific">Pseudomonas syringae pv. tomato (strain ATCC BAA-871 / DC3000)</name>
    <dbReference type="NCBI Taxonomy" id="223283"/>
    <lineage>
        <taxon>Bacteria</taxon>
        <taxon>Pseudomonadati</taxon>
        <taxon>Pseudomonadota</taxon>
        <taxon>Gammaproteobacteria</taxon>
        <taxon>Pseudomonadales</taxon>
        <taxon>Pseudomonadaceae</taxon>
        <taxon>Pseudomonas</taxon>
    </lineage>
</organism>
<protein>
    <recommendedName>
        <fullName evidence="1">NADH-quinone oxidoreductase subunit H</fullName>
        <ecNumber evidence="1">7.1.1.-</ecNumber>
    </recommendedName>
    <alternativeName>
        <fullName evidence="1">NADH dehydrogenase I subunit H</fullName>
    </alternativeName>
    <alternativeName>
        <fullName evidence="1">NDH-1 subunit H</fullName>
    </alternativeName>
</protein>
<reference key="1">
    <citation type="journal article" date="2003" name="Proc. Natl. Acad. Sci. U.S.A.">
        <title>The complete genome sequence of the Arabidopsis and tomato pathogen Pseudomonas syringae pv. tomato DC3000.</title>
        <authorList>
            <person name="Buell C.R."/>
            <person name="Joardar V."/>
            <person name="Lindeberg M."/>
            <person name="Selengut J."/>
            <person name="Paulsen I.T."/>
            <person name="Gwinn M.L."/>
            <person name="Dodson R.J."/>
            <person name="DeBoy R.T."/>
            <person name="Durkin A.S."/>
            <person name="Kolonay J.F."/>
            <person name="Madupu R."/>
            <person name="Daugherty S.C."/>
            <person name="Brinkac L.M."/>
            <person name="Beanan M.J."/>
            <person name="Haft D.H."/>
            <person name="Nelson W.C."/>
            <person name="Davidsen T.M."/>
            <person name="Zafar N."/>
            <person name="Zhou L."/>
            <person name="Liu J."/>
            <person name="Yuan Q."/>
            <person name="Khouri H.M."/>
            <person name="Fedorova N.B."/>
            <person name="Tran B."/>
            <person name="Russell D."/>
            <person name="Berry K.J."/>
            <person name="Utterback T.R."/>
            <person name="Van Aken S.E."/>
            <person name="Feldblyum T.V."/>
            <person name="D'Ascenzo M."/>
            <person name="Deng W.-L."/>
            <person name="Ramos A.R."/>
            <person name="Alfano J.R."/>
            <person name="Cartinhour S."/>
            <person name="Chatterjee A.K."/>
            <person name="Delaney T.P."/>
            <person name="Lazarowitz S.G."/>
            <person name="Martin G.B."/>
            <person name="Schneider D.J."/>
            <person name="Tang X."/>
            <person name="Bender C.L."/>
            <person name="White O."/>
            <person name="Fraser C.M."/>
            <person name="Collmer A."/>
        </authorList>
    </citation>
    <scope>NUCLEOTIDE SEQUENCE [LARGE SCALE GENOMIC DNA]</scope>
    <source>
        <strain>ATCC BAA-871 / DC3000</strain>
    </source>
</reference>
<gene>
    <name evidence="1" type="primary">nuoH</name>
    <name type="ordered locus">PSPTO_3371</name>
</gene>
<accession>Q87ZQ3</accession>
<evidence type="ECO:0000255" key="1">
    <source>
        <dbReference type="HAMAP-Rule" id="MF_01350"/>
    </source>
</evidence>
<name>NUOH_PSESM</name>
<keyword id="KW-0997">Cell inner membrane</keyword>
<keyword id="KW-1003">Cell membrane</keyword>
<keyword id="KW-0472">Membrane</keyword>
<keyword id="KW-0520">NAD</keyword>
<keyword id="KW-0874">Quinone</keyword>
<keyword id="KW-1185">Reference proteome</keyword>
<keyword id="KW-1278">Translocase</keyword>
<keyword id="KW-0812">Transmembrane</keyword>
<keyword id="KW-1133">Transmembrane helix</keyword>
<keyword id="KW-0830">Ubiquinone</keyword>
<dbReference type="EC" id="7.1.1.-" evidence="1"/>
<dbReference type="EMBL" id="AE016853">
    <property type="protein sequence ID" value="AAO56849.1"/>
    <property type="molecule type" value="Genomic_DNA"/>
</dbReference>
<dbReference type="RefSeq" id="NP_793154.1">
    <property type="nucleotide sequence ID" value="NC_004578.1"/>
</dbReference>
<dbReference type="RefSeq" id="WP_003411662.1">
    <property type="nucleotide sequence ID" value="NC_004578.1"/>
</dbReference>
<dbReference type="SMR" id="Q87ZQ3"/>
<dbReference type="STRING" id="223283.PSPTO_3371"/>
<dbReference type="GeneID" id="64465342"/>
<dbReference type="KEGG" id="pst:PSPTO_3371"/>
<dbReference type="PATRIC" id="fig|223283.9.peg.3451"/>
<dbReference type="eggNOG" id="COG1005">
    <property type="taxonomic scope" value="Bacteria"/>
</dbReference>
<dbReference type="HOGENOM" id="CLU_015134_0_1_6"/>
<dbReference type="OrthoDB" id="9803734at2"/>
<dbReference type="PhylomeDB" id="Q87ZQ3"/>
<dbReference type="Proteomes" id="UP000002515">
    <property type="component" value="Chromosome"/>
</dbReference>
<dbReference type="GO" id="GO:0005886">
    <property type="term" value="C:plasma membrane"/>
    <property type="evidence" value="ECO:0007669"/>
    <property type="project" value="UniProtKB-SubCell"/>
</dbReference>
<dbReference type="GO" id="GO:0003954">
    <property type="term" value="F:NADH dehydrogenase activity"/>
    <property type="evidence" value="ECO:0007669"/>
    <property type="project" value="TreeGrafter"/>
</dbReference>
<dbReference type="GO" id="GO:0016655">
    <property type="term" value="F:oxidoreductase activity, acting on NAD(P)H, quinone or similar compound as acceptor"/>
    <property type="evidence" value="ECO:0007669"/>
    <property type="project" value="UniProtKB-UniRule"/>
</dbReference>
<dbReference type="GO" id="GO:0048038">
    <property type="term" value="F:quinone binding"/>
    <property type="evidence" value="ECO:0007669"/>
    <property type="project" value="UniProtKB-KW"/>
</dbReference>
<dbReference type="GO" id="GO:0009060">
    <property type="term" value="P:aerobic respiration"/>
    <property type="evidence" value="ECO:0007669"/>
    <property type="project" value="TreeGrafter"/>
</dbReference>
<dbReference type="HAMAP" id="MF_01350">
    <property type="entry name" value="NDH1_NuoH"/>
    <property type="match status" value="1"/>
</dbReference>
<dbReference type="InterPro" id="IPR001694">
    <property type="entry name" value="NADH_UbQ_OxRdtase_su1/FPO"/>
</dbReference>
<dbReference type="InterPro" id="IPR018086">
    <property type="entry name" value="NADH_UbQ_OxRdtase_su1_CS"/>
</dbReference>
<dbReference type="NCBIfam" id="NF004740">
    <property type="entry name" value="PRK06076.1-1"/>
    <property type="match status" value="1"/>
</dbReference>
<dbReference type="NCBIfam" id="NF004741">
    <property type="entry name" value="PRK06076.1-2"/>
    <property type="match status" value="1"/>
</dbReference>
<dbReference type="PANTHER" id="PTHR11432">
    <property type="entry name" value="NADH DEHYDROGENASE SUBUNIT 1"/>
    <property type="match status" value="1"/>
</dbReference>
<dbReference type="PANTHER" id="PTHR11432:SF3">
    <property type="entry name" value="NADH-UBIQUINONE OXIDOREDUCTASE CHAIN 1"/>
    <property type="match status" value="1"/>
</dbReference>
<dbReference type="Pfam" id="PF00146">
    <property type="entry name" value="NADHdh"/>
    <property type="match status" value="1"/>
</dbReference>
<dbReference type="PROSITE" id="PS00667">
    <property type="entry name" value="COMPLEX1_ND1_1"/>
    <property type="match status" value="1"/>
</dbReference>
<dbReference type="PROSITE" id="PS00668">
    <property type="entry name" value="COMPLEX1_ND1_2"/>
    <property type="match status" value="1"/>
</dbReference>